<reference key="1">
    <citation type="journal article" date="2005" name="Science">
        <title>The transcriptional landscape of the mammalian genome.</title>
        <authorList>
            <person name="Carninci P."/>
            <person name="Kasukawa T."/>
            <person name="Katayama S."/>
            <person name="Gough J."/>
            <person name="Frith M.C."/>
            <person name="Maeda N."/>
            <person name="Oyama R."/>
            <person name="Ravasi T."/>
            <person name="Lenhard B."/>
            <person name="Wells C."/>
            <person name="Kodzius R."/>
            <person name="Shimokawa K."/>
            <person name="Bajic V.B."/>
            <person name="Brenner S.E."/>
            <person name="Batalov S."/>
            <person name="Forrest A.R."/>
            <person name="Zavolan M."/>
            <person name="Davis M.J."/>
            <person name="Wilming L.G."/>
            <person name="Aidinis V."/>
            <person name="Allen J.E."/>
            <person name="Ambesi-Impiombato A."/>
            <person name="Apweiler R."/>
            <person name="Aturaliya R.N."/>
            <person name="Bailey T.L."/>
            <person name="Bansal M."/>
            <person name="Baxter L."/>
            <person name="Beisel K.W."/>
            <person name="Bersano T."/>
            <person name="Bono H."/>
            <person name="Chalk A.M."/>
            <person name="Chiu K.P."/>
            <person name="Choudhary V."/>
            <person name="Christoffels A."/>
            <person name="Clutterbuck D.R."/>
            <person name="Crowe M.L."/>
            <person name="Dalla E."/>
            <person name="Dalrymple B.P."/>
            <person name="de Bono B."/>
            <person name="Della Gatta G."/>
            <person name="di Bernardo D."/>
            <person name="Down T."/>
            <person name="Engstrom P."/>
            <person name="Fagiolini M."/>
            <person name="Faulkner G."/>
            <person name="Fletcher C.F."/>
            <person name="Fukushima T."/>
            <person name="Furuno M."/>
            <person name="Futaki S."/>
            <person name="Gariboldi M."/>
            <person name="Georgii-Hemming P."/>
            <person name="Gingeras T.R."/>
            <person name="Gojobori T."/>
            <person name="Green R.E."/>
            <person name="Gustincich S."/>
            <person name="Harbers M."/>
            <person name="Hayashi Y."/>
            <person name="Hensch T.K."/>
            <person name="Hirokawa N."/>
            <person name="Hill D."/>
            <person name="Huminiecki L."/>
            <person name="Iacono M."/>
            <person name="Ikeo K."/>
            <person name="Iwama A."/>
            <person name="Ishikawa T."/>
            <person name="Jakt M."/>
            <person name="Kanapin A."/>
            <person name="Katoh M."/>
            <person name="Kawasawa Y."/>
            <person name="Kelso J."/>
            <person name="Kitamura H."/>
            <person name="Kitano H."/>
            <person name="Kollias G."/>
            <person name="Krishnan S.P."/>
            <person name="Kruger A."/>
            <person name="Kummerfeld S.K."/>
            <person name="Kurochkin I.V."/>
            <person name="Lareau L.F."/>
            <person name="Lazarevic D."/>
            <person name="Lipovich L."/>
            <person name="Liu J."/>
            <person name="Liuni S."/>
            <person name="McWilliam S."/>
            <person name="Madan Babu M."/>
            <person name="Madera M."/>
            <person name="Marchionni L."/>
            <person name="Matsuda H."/>
            <person name="Matsuzawa S."/>
            <person name="Miki H."/>
            <person name="Mignone F."/>
            <person name="Miyake S."/>
            <person name="Morris K."/>
            <person name="Mottagui-Tabar S."/>
            <person name="Mulder N."/>
            <person name="Nakano N."/>
            <person name="Nakauchi H."/>
            <person name="Ng P."/>
            <person name="Nilsson R."/>
            <person name="Nishiguchi S."/>
            <person name="Nishikawa S."/>
            <person name="Nori F."/>
            <person name="Ohara O."/>
            <person name="Okazaki Y."/>
            <person name="Orlando V."/>
            <person name="Pang K.C."/>
            <person name="Pavan W.J."/>
            <person name="Pavesi G."/>
            <person name="Pesole G."/>
            <person name="Petrovsky N."/>
            <person name="Piazza S."/>
            <person name="Reed J."/>
            <person name="Reid J.F."/>
            <person name="Ring B.Z."/>
            <person name="Ringwald M."/>
            <person name="Rost B."/>
            <person name="Ruan Y."/>
            <person name="Salzberg S.L."/>
            <person name="Sandelin A."/>
            <person name="Schneider C."/>
            <person name="Schoenbach C."/>
            <person name="Sekiguchi K."/>
            <person name="Semple C.A."/>
            <person name="Seno S."/>
            <person name="Sessa L."/>
            <person name="Sheng Y."/>
            <person name="Shibata Y."/>
            <person name="Shimada H."/>
            <person name="Shimada K."/>
            <person name="Silva D."/>
            <person name="Sinclair B."/>
            <person name="Sperling S."/>
            <person name="Stupka E."/>
            <person name="Sugiura K."/>
            <person name="Sultana R."/>
            <person name="Takenaka Y."/>
            <person name="Taki K."/>
            <person name="Tammoja K."/>
            <person name="Tan S.L."/>
            <person name="Tang S."/>
            <person name="Taylor M.S."/>
            <person name="Tegner J."/>
            <person name="Teichmann S.A."/>
            <person name="Ueda H.R."/>
            <person name="van Nimwegen E."/>
            <person name="Verardo R."/>
            <person name="Wei C.L."/>
            <person name="Yagi K."/>
            <person name="Yamanishi H."/>
            <person name="Zabarovsky E."/>
            <person name="Zhu S."/>
            <person name="Zimmer A."/>
            <person name="Hide W."/>
            <person name="Bult C."/>
            <person name="Grimmond S.M."/>
            <person name="Teasdale R.D."/>
            <person name="Liu E.T."/>
            <person name="Brusic V."/>
            <person name="Quackenbush J."/>
            <person name="Wahlestedt C."/>
            <person name="Mattick J.S."/>
            <person name="Hume D.A."/>
            <person name="Kai C."/>
            <person name="Sasaki D."/>
            <person name="Tomaru Y."/>
            <person name="Fukuda S."/>
            <person name="Kanamori-Katayama M."/>
            <person name="Suzuki M."/>
            <person name="Aoki J."/>
            <person name="Arakawa T."/>
            <person name="Iida J."/>
            <person name="Imamura K."/>
            <person name="Itoh M."/>
            <person name="Kato T."/>
            <person name="Kawaji H."/>
            <person name="Kawagashira N."/>
            <person name="Kawashima T."/>
            <person name="Kojima M."/>
            <person name="Kondo S."/>
            <person name="Konno H."/>
            <person name="Nakano K."/>
            <person name="Ninomiya N."/>
            <person name="Nishio T."/>
            <person name="Okada M."/>
            <person name="Plessy C."/>
            <person name="Shibata K."/>
            <person name="Shiraki T."/>
            <person name="Suzuki S."/>
            <person name="Tagami M."/>
            <person name="Waki K."/>
            <person name="Watahiki A."/>
            <person name="Okamura-Oho Y."/>
            <person name="Suzuki H."/>
            <person name="Kawai J."/>
            <person name="Hayashizaki Y."/>
        </authorList>
    </citation>
    <scope>NUCLEOTIDE SEQUENCE [LARGE SCALE MRNA]</scope>
    <source>
        <strain>C57BL/6J</strain>
        <tissue>Bone marrow</tissue>
        <tissue>Embryo</tissue>
    </source>
</reference>
<reference key="2">
    <citation type="journal article" date="2004" name="Genome Res.">
        <title>The status, quality, and expansion of the NIH full-length cDNA project: the Mammalian Gene Collection (MGC).</title>
        <authorList>
            <consortium name="The MGC Project Team"/>
        </authorList>
    </citation>
    <scope>NUCLEOTIDE SEQUENCE [LARGE SCALE MRNA]</scope>
    <source>
        <strain>FVB/N-3</strain>
        <tissue>Liver</tissue>
        <tissue>Mammary tumor</tissue>
    </source>
</reference>
<reference key="3">
    <citation type="submission" date="2007-03" db="UniProtKB">
        <authorList>
            <person name="Lubec G."/>
            <person name="Klug S."/>
        </authorList>
    </citation>
    <scope>PROTEIN SEQUENCE OF 309-324</scope>
    <scope>IDENTIFICATION BY MASS SPECTROMETRY</scope>
    <source>
        <tissue>Hippocampus</tissue>
    </source>
</reference>
<reference key="4">
    <citation type="journal article" date="2008" name="J. Proteome Res.">
        <title>Large-scale identification and evolution indexing of tyrosine phosphorylation sites from murine brain.</title>
        <authorList>
            <person name="Ballif B.A."/>
            <person name="Carey G.R."/>
            <person name="Sunyaev S.R."/>
            <person name="Gygi S.P."/>
        </authorList>
    </citation>
    <scope>PHOSPHORYLATION [LARGE SCALE ANALYSIS] AT TYR-67</scope>
    <scope>IDENTIFICATION BY MASS SPECTROMETRY [LARGE SCALE ANALYSIS]</scope>
    <source>
        <tissue>Brain</tissue>
    </source>
</reference>
<reference key="5">
    <citation type="journal article" date="2010" name="Cell">
        <title>A tissue-specific atlas of mouse protein phosphorylation and expression.</title>
        <authorList>
            <person name="Huttlin E.L."/>
            <person name="Jedrychowski M.P."/>
            <person name="Elias J.E."/>
            <person name="Goswami T."/>
            <person name="Rad R."/>
            <person name="Beausoleil S.A."/>
            <person name="Villen J."/>
            <person name="Haas W."/>
            <person name="Sowa M.E."/>
            <person name="Gygi S.P."/>
        </authorList>
    </citation>
    <scope>IDENTIFICATION BY MASS SPECTROMETRY [LARGE SCALE ANALYSIS]</scope>
    <source>
        <tissue>Brain</tissue>
        <tissue>Brown adipose tissue</tissue>
        <tissue>Heart</tissue>
        <tissue>Kidney</tissue>
        <tissue>Liver</tissue>
        <tissue>Lung</tissue>
        <tissue>Pancreas</tissue>
        <tissue>Spleen</tissue>
        <tissue>Testis</tissue>
    </source>
</reference>
<reference key="6">
    <citation type="journal article" date="2013" name="Proc. Natl. Acad. Sci. U.S.A.">
        <title>Label-free quantitative proteomics of the lysine acetylome in mitochondria identifies substrates of SIRT3 in metabolic pathways.</title>
        <authorList>
            <person name="Rardin M.J."/>
            <person name="Newman J.C."/>
            <person name="Held J.M."/>
            <person name="Cusack M.P."/>
            <person name="Sorensen D.J."/>
            <person name="Li B."/>
            <person name="Schilling B."/>
            <person name="Mooney S.D."/>
            <person name="Kahn C.R."/>
            <person name="Verdin E."/>
            <person name="Gibson B.W."/>
        </authorList>
    </citation>
    <scope>ACETYLATION [LARGE SCALE ANALYSIS] AT LYS-354</scope>
    <scope>IDENTIFICATION BY MASS SPECTROMETRY [LARGE SCALE ANALYSIS]</scope>
    <source>
        <tissue>Liver</tissue>
    </source>
</reference>
<protein>
    <recommendedName>
        <fullName>Pyruvate dehydrogenase E1 component subunit beta, mitochondrial</fullName>
        <shortName>PDHE1-B</shortName>
        <ecNumber>1.2.4.1</ecNumber>
    </recommendedName>
</protein>
<keyword id="KW-0007">Acetylation</keyword>
<keyword id="KW-0119">Carbohydrate metabolism</keyword>
<keyword id="KW-0903">Direct protein sequencing</keyword>
<keyword id="KW-0313">Glucose metabolism</keyword>
<keyword id="KW-0479">Metal-binding</keyword>
<keyword id="KW-0496">Mitochondrion</keyword>
<keyword id="KW-0560">Oxidoreductase</keyword>
<keyword id="KW-0597">Phosphoprotein</keyword>
<keyword id="KW-0630">Potassium</keyword>
<keyword id="KW-0670">Pyruvate</keyword>
<keyword id="KW-1185">Reference proteome</keyword>
<keyword id="KW-0786">Thiamine pyrophosphate</keyword>
<keyword id="KW-0809">Transit peptide</keyword>
<keyword id="KW-0816">Tricarboxylic acid cycle</keyword>
<evidence type="ECO:0000250" key="1"/>
<evidence type="ECO:0000250" key="2">
    <source>
        <dbReference type="UniProtKB" id="P11177"/>
    </source>
</evidence>
<evidence type="ECO:0000305" key="3"/>
<evidence type="ECO:0007744" key="4">
    <source>
    </source>
</evidence>
<evidence type="ECO:0007744" key="5">
    <source>
    </source>
</evidence>
<feature type="transit peptide" description="Mitochondrion" evidence="1">
    <location>
        <begin position="1"/>
        <end position="30"/>
    </location>
</feature>
<feature type="chain" id="PRO_0000020458" description="Pyruvate dehydrogenase E1 component subunit beta, mitochondrial">
    <location>
        <begin position="31"/>
        <end position="359"/>
    </location>
</feature>
<feature type="binding site" evidence="2">
    <location>
        <position position="89"/>
    </location>
    <ligand>
        <name>thiamine diphosphate</name>
        <dbReference type="ChEBI" id="CHEBI:58937"/>
        <note>ligand shared with alpha subunit</note>
    </ligand>
</feature>
<feature type="binding site" evidence="2">
    <location>
        <position position="142"/>
    </location>
    <ligand>
        <name>K(+)</name>
        <dbReference type="ChEBI" id="CHEBI:29103"/>
        <note>structural</note>
    </ligand>
</feature>
<feature type="binding site" evidence="2">
    <location>
        <position position="190"/>
    </location>
    <ligand>
        <name>K(+)</name>
        <dbReference type="ChEBI" id="CHEBI:29103"/>
        <note>structural</note>
    </ligand>
</feature>
<feature type="binding site" evidence="2">
    <location>
        <position position="191"/>
    </location>
    <ligand>
        <name>K(+)</name>
        <dbReference type="ChEBI" id="CHEBI:29103"/>
        <note>structural</note>
    </ligand>
</feature>
<feature type="binding site" evidence="2">
    <location>
        <position position="193"/>
    </location>
    <ligand>
        <name>K(+)</name>
        <dbReference type="ChEBI" id="CHEBI:29103"/>
        <note>structural</note>
    </ligand>
</feature>
<feature type="binding site" evidence="2">
    <location>
        <position position="195"/>
    </location>
    <ligand>
        <name>K(+)</name>
        <dbReference type="ChEBI" id="CHEBI:29103"/>
        <note>structural</note>
    </ligand>
</feature>
<feature type="site" description="Important for interaction with DLAT" evidence="2">
    <location>
        <position position="319"/>
    </location>
</feature>
<feature type="modified residue" description="Phosphotyrosine" evidence="4">
    <location>
        <position position="67"/>
    </location>
</feature>
<feature type="modified residue" description="N6-acetyllysine" evidence="5">
    <location>
        <position position="354"/>
    </location>
</feature>
<feature type="sequence conflict" description="In Ref. 1; BAE38906." evidence="3" ref="1">
    <original>I</original>
    <variation>M</variation>
    <location>
        <position position="237"/>
    </location>
</feature>
<gene>
    <name type="primary">Pdhb</name>
</gene>
<organism>
    <name type="scientific">Mus musculus</name>
    <name type="common">Mouse</name>
    <dbReference type="NCBI Taxonomy" id="10090"/>
    <lineage>
        <taxon>Eukaryota</taxon>
        <taxon>Metazoa</taxon>
        <taxon>Chordata</taxon>
        <taxon>Craniata</taxon>
        <taxon>Vertebrata</taxon>
        <taxon>Euteleostomi</taxon>
        <taxon>Mammalia</taxon>
        <taxon>Eutheria</taxon>
        <taxon>Euarchontoglires</taxon>
        <taxon>Glires</taxon>
        <taxon>Rodentia</taxon>
        <taxon>Myomorpha</taxon>
        <taxon>Muroidea</taxon>
        <taxon>Muridae</taxon>
        <taxon>Murinae</taxon>
        <taxon>Mus</taxon>
        <taxon>Mus</taxon>
    </lineage>
</organism>
<comment type="function">
    <text evidence="1">The pyruvate dehydrogenase complex catalyzes the overall conversion of pyruvate to acetyl-CoA and CO(2), and thereby links the glycolytic pathway to the tricarboxylic cycle.</text>
</comment>
<comment type="catalytic activity">
    <reaction>
        <text>N(6)-[(R)-lipoyl]-L-lysyl-[protein] + pyruvate + H(+) = N(6)-[(R)-S(8)-acetyldihydrolipoyl]-L-lysyl-[protein] + CO2</text>
        <dbReference type="Rhea" id="RHEA:19189"/>
        <dbReference type="Rhea" id="RHEA-COMP:10474"/>
        <dbReference type="Rhea" id="RHEA-COMP:10478"/>
        <dbReference type="ChEBI" id="CHEBI:15361"/>
        <dbReference type="ChEBI" id="CHEBI:15378"/>
        <dbReference type="ChEBI" id="CHEBI:16526"/>
        <dbReference type="ChEBI" id="CHEBI:83099"/>
        <dbReference type="ChEBI" id="CHEBI:83111"/>
        <dbReference type="EC" id="1.2.4.1"/>
    </reaction>
</comment>
<comment type="cofactor">
    <cofactor evidence="2">
        <name>thiamine diphosphate</name>
        <dbReference type="ChEBI" id="CHEBI:58937"/>
    </cofactor>
</comment>
<comment type="subunit">
    <text evidence="2">Heterotetramer of two PDHA1 and two PDHB subunits. The heterotetramer interacts with DLAT, and is part of the multimeric pyruvate dehydrogenase complex that contains multiple copies of pyruvate dehydrogenase (E1), dihydrolipoamide acetyltransferase (DLAT, E2) and lipoamide dehydrogenase (DLD, E3). These subunits are bound to an inner core composed of about 48 DLAT and 12 PDHX molecules. Interacts with DLAT.</text>
</comment>
<comment type="subcellular location">
    <subcellularLocation>
        <location evidence="1">Mitochondrion matrix</location>
    </subcellularLocation>
</comment>
<comment type="sequence caution" evidence="3">
    <conflict type="erroneous initiation">
        <sequence resource="EMBL-CDS" id="AAH02188"/>
    </conflict>
</comment>
<accession>Q9D051</accession>
<accession>Q3TL86</accession>
<accession>Q505N8</accession>
<accession>Q99LW9</accession>
<sequence length="359" mass="38937">MAVVAGLVRGPLRQASGLLKRRFHRSAPAAVQLTVREAINQGMDEELERDEKVFLLGEEVAQYDGAYKVSRGLWKKYGDKRIIDTPISEMGFAGIAVGAAMAGLRPICEFMTFNFSMQAIDQVINSAAKTYYMSAGLQPVPIVFRGPNGASAGVAAQHSQCFAAWYGHCPGLKVVSPWNSEDAKGLIKSAIRDNNPVVMLENELMYGVAFELPAEAQSKDFLIPIGKAKIERQGTHITVVAHSRPVGHCLEAAAVLSKEGIECEVINLRTIRPMDIEAIEASVMKTNHLVTVEGGWPQFGVGAEICARIMEGPAFNFLDAPAVRVTGADVPMPYAKVLEDNSVPQVKDIIFAVKKTLNI</sequence>
<proteinExistence type="evidence at protein level"/>
<dbReference type="EC" id="1.2.4.1"/>
<dbReference type="EMBL" id="AK011810">
    <property type="protein sequence ID" value="BAB27855.1"/>
    <property type="molecule type" value="mRNA"/>
</dbReference>
<dbReference type="EMBL" id="AK153058">
    <property type="protein sequence ID" value="BAE31684.1"/>
    <property type="molecule type" value="mRNA"/>
</dbReference>
<dbReference type="EMBL" id="AK166631">
    <property type="protein sequence ID" value="BAE38906.1"/>
    <property type="molecule type" value="mRNA"/>
</dbReference>
<dbReference type="EMBL" id="BC002188">
    <property type="protein sequence ID" value="AAH02188.1"/>
    <property type="status" value="ALT_INIT"/>
    <property type="molecule type" value="mRNA"/>
</dbReference>
<dbReference type="EMBL" id="BC019512">
    <property type="protein sequence ID" value="AAH19512.1"/>
    <property type="molecule type" value="mRNA"/>
</dbReference>
<dbReference type="EMBL" id="BC094468">
    <property type="protein sequence ID" value="AAH94468.1"/>
    <property type="molecule type" value="mRNA"/>
</dbReference>
<dbReference type="CCDS" id="CCDS36800.1"/>
<dbReference type="PIR" id="PT0096">
    <property type="entry name" value="PT0096"/>
</dbReference>
<dbReference type="RefSeq" id="NP_077183.1">
    <property type="nucleotide sequence ID" value="NM_024221.3"/>
</dbReference>
<dbReference type="RefSeq" id="XP_030103844.1">
    <property type="nucleotide sequence ID" value="XM_030247984.1"/>
</dbReference>
<dbReference type="SMR" id="Q9D051"/>
<dbReference type="BioGRID" id="212768">
    <property type="interactions" value="58"/>
</dbReference>
<dbReference type="ComplexPortal" id="CPX-377">
    <property type="entry name" value="Pyruvate dehydrogenase E1 heterotetramer"/>
</dbReference>
<dbReference type="FunCoup" id="Q9D051">
    <property type="interactions" value="1936"/>
</dbReference>
<dbReference type="IntAct" id="Q9D051">
    <property type="interactions" value="20"/>
</dbReference>
<dbReference type="MINT" id="Q9D051"/>
<dbReference type="STRING" id="10090.ENSMUSP00000022268"/>
<dbReference type="GlyGen" id="Q9D051">
    <property type="glycosylation" value="1 site, 1 O-linked glycan (1 site)"/>
</dbReference>
<dbReference type="iPTMnet" id="Q9D051"/>
<dbReference type="MetOSite" id="Q9D051"/>
<dbReference type="PhosphoSitePlus" id="Q9D051"/>
<dbReference type="SwissPalm" id="Q9D051"/>
<dbReference type="REPRODUCTION-2DPAGE" id="Q9D051"/>
<dbReference type="jPOST" id="Q9D051"/>
<dbReference type="PaxDb" id="10090-ENSMUSP00000022268"/>
<dbReference type="PeptideAtlas" id="Q9D051"/>
<dbReference type="ProteomicsDB" id="293496"/>
<dbReference type="Pumba" id="Q9D051"/>
<dbReference type="Antibodypedia" id="31652">
    <property type="antibodies" value="241 antibodies from 34 providers"/>
</dbReference>
<dbReference type="DNASU" id="68263"/>
<dbReference type="Ensembl" id="ENSMUST00000022268.10">
    <property type="protein sequence ID" value="ENSMUSP00000022268.9"/>
    <property type="gene ID" value="ENSMUSG00000021748.10"/>
</dbReference>
<dbReference type="GeneID" id="68263"/>
<dbReference type="KEGG" id="mmu:68263"/>
<dbReference type="UCSC" id="uc007sev.1">
    <property type="organism name" value="mouse"/>
</dbReference>
<dbReference type="AGR" id="MGI:1915513"/>
<dbReference type="CTD" id="5162"/>
<dbReference type="MGI" id="MGI:1915513">
    <property type="gene designation" value="Pdhb"/>
</dbReference>
<dbReference type="VEuPathDB" id="HostDB:ENSMUSG00000021748"/>
<dbReference type="eggNOG" id="KOG0524">
    <property type="taxonomic scope" value="Eukaryota"/>
</dbReference>
<dbReference type="GeneTree" id="ENSGT00940000155146"/>
<dbReference type="HOGENOM" id="CLU_012907_1_1_1"/>
<dbReference type="InParanoid" id="Q9D051"/>
<dbReference type="OMA" id="WYANCPG"/>
<dbReference type="OrthoDB" id="10266385at2759"/>
<dbReference type="PhylomeDB" id="Q9D051"/>
<dbReference type="TreeFam" id="TF105674"/>
<dbReference type="BRENDA" id="1.2.1.104">
    <property type="organism ID" value="3474"/>
</dbReference>
<dbReference type="Reactome" id="R-MMU-204174">
    <property type="pathway name" value="Regulation of pyruvate dehydrogenase (PDH) complex"/>
</dbReference>
<dbReference type="Reactome" id="R-MMU-5362517">
    <property type="pathway name" value="Signaling by Retinoic Acid"/>
</dbReference>
<dbReference type="Reactome" id="R-MMU-9837999">
    <property type="pathway name" value="Mitochondrial protein degradation"/>
</dbReference>
<dbReference type="Reactome" id="R-MMU-9861559">
    <property type="pathway name" value="PDH complex synthesizes acetyl-CoA from PYR"/>
</dbReference>
<dbReference type="BioGRID-ORCS" id="68263">
    <property type="hits" value="13 hits in 79 CRISPR screens"/>
</dbReference>
<dbReference type="CD-CODE" id="CE726F99">
    <property type="entry name" value="Postsynaptic density"/>
</dbReference>
<dbReference type="ChiTaRS" id="Pdhb">
    <property type="organism name" value="mouse"/>
</dbReference>
<dbReference type="PRO" id="PR:Q9D051"/>
<dbReference type="Proteomes" id="UP000000589">
    <property type="component" value="Chromosome 14"/>
</dbReference>
<dbReference type="RNAct" id="Q9D051">
    <property type="molecule type" value="protein"/>
</dbReference>
<dbReference type="Bgee" id="ENSMUSG00000021748">
    <property type="expression patterns" value="Expressed in spermatocyte and 251 other cell types or tissues"/>
</dbReference>
<dbReference type="GO" id="GO:1902493">
    <property type="term" value="C:acetyltransferase complex"/>
    <property type="evidence" value="ECO:0000266"/>
    <property type="project" value="MGI"/>
</dbReference>
<dbReference type="GO" id="GO:1902494">
    <property type="term" value="C:catalytic complex"/>
    <property type="evidence" value="ECO:0000266"/>
    <property type="project" value="MGI"/>
</dbReference>
<dbReference type="GO" id="GO:0005759">
    <property type="term" value="C:mitochondrial matrix"/>
    <property type="evidence" value="ECO:0007669"/>
    <property type="project" value="UniProtKB-SubCell"/>
</dbReference>
<dbReference type="GO" id="GO:0005739">
    <property type="term" value="C:mitochondrion"/>
    <property type="evidence" value="ECO:0007005"/>
    <property type="project" value="MGI"/>
</dbReference>
<dbReference type="GO" id="GO:0005654">
    <property type="term" value="C:nucleoplasm"/>
    <property type="evidence" value="ECO:0007669"/>
    <property type="project" value="Ensembl"/>
</dbReference>
<dbReference type="GO" id="GO:0045254">
    <property type="term" value="C:pyruvate dehydrogenase complex"/>
    <property type="evidence" value="ECO:0000250"/>
    <property type="project" value="UniProtKB"/>
</dbReference>
<dbReference type="GO" id="GO:0046872">
    <property type="term" value="F:metal ion binding"/>
    <property type="evidence" value="ECO:0007669"/>
    <property type="project" value="UniProtKB-KW"/>
</dbReference>
<dbReference type="GO" id="GO:0004739">
    <property type="term" value="F:pyruvate dehydrogenase (acetyl-transferring) activity"/>
    <property type="evidence" value="ECO:0007669"/>
    <property type="project" value="UniProtKB-EC"/>
</dbReference>
<dbReference type="GO" id="GO:0034604">
    <property type="term" value="F:pyruvate dehydrogenase (NAD+) activity"/>
    <property type="evidence" value="ECO:0007669"/>
    <property type="project" value="Ensembl"/>
</dbReference>
<dbReference type="GO" id="GO:0006006">
    <property type="term" value="P:glucose metabolic process"/>
    <property type="evidence" value="ECO:0007669"/>
    <property type="project" value="UniProtKB-KW"/>
</dbReference>
<dbReference type="GO" id="GO:0006086">
    <property type="term" value="P:pyruvate decarboxylation to acetyl-CoA"/>
    <property type="evidence" value="ECO:0000250"/>
    <property type="project" value="UniProtKB"/>
</dbReference>
<dbReference type="GO" id="GO:0006099">
    <property type="term" value="P:tricarboxylic acid cycle"/>
    <property type="evidence" value="ECO:0007669"/>
    <property type="project" value="UniProtKB-KW"/>
</dbReference>
<dbReference type="CDD" id="cd07036">
    <property type="entry name" value="TPP_PYR_E1-PDHc-beta_like"/>
    <property type="match status" value="1"/>
</dbReference>
<dbReference type="FunFam" id="3.40.50.920:FF:000001">
    <property type="entry name" value="Pyruvate dehydrogenase E1 beta subunit"/>
    <property type="match status" value="1"/>
</dbReference>
<dbReference type="FunFam" id="3.40.50.970:FF:000006">
    <property type="entry name" value="Pyruvate dehydrogenase E1 component subunit beta"/>
    <property type="match status" value="1"/>
</dbReference>
<dbReference type="Gene3D" id="3.40.50.920">
    <property type="match status" value="1"/>
</dbReference>
<dbReference type="Gene3D" id="3.40.50.970">
    <property type="match status" value="1"/>
</dbReference>
<dbReference type="InterPro" id="IPR027110">
    <property type="entry name" value="PDHB_mito-type"/>
</dbReference>
<dbReference type="InterPro" id="IPR029061">
    <property type="entry name" value="THDP-binding"/>
</dbReference>
<dbReference type="InterPro" id="IPR009014">
    <property type="entry name" value="Transketo_C/PFOR_II"/>
</dbReference>
<dbReference type="InterPro" id="IPR005475">
    <property type="entry name" value="Transketolase-like_Pyr-bd"/>
</dbReference>
<dbReference type="InterPro" id="IPR033248">
    <property type="entry name" value="Transketolase_C"/>
</dbReference>
<dbReference type="NCBIfam" id="NF006667">
    <property type="entry name" value="PRK09212.1"/>
    <property type="match status" value="1"/>
</dbReference>
<dbReference type="NCBIfam" id="NF008854">
    <property type="entry name" value="PRK11892.1"/>
    <property type="match status" value="1"/>
</dbReference>
<dbReference type="PANTHER" id="PTHR11624">
    <property type="entry name" value="DEHYDROGENASE RELATED"/>
    <property type="match status" value="1"/>
</dbReference>
<dbReference type="PANTHER" id="PTHR11624:SF96">
    <property type="entry name" value="PYRUVATE DEHYDROGENASE E1 COMPONENT SUBUNIT BETA, MITOCHONDRIAL"/>
    <property type="match status" value="1"/>
</dbReference>
<dbReference type="Pfam" id="PF02779">
    <property type="entry name" value="Transket_pyr"/>
    <property type="match status" value="1"/>
</dbReference>
<dbReference type="Pfam" id="PF02780">
    <property type="entry name" value="Transketolase_C"/>
    <property type="match status" value="1"/>
</dbReference>
<dbReference type="SMART" id="SM00861">
    <property type="entry name" value="Transket_pyr"/>
    <property type="match status" value="1"/>
</dbReference>
<dbReference type="SUPFAM" id="SSF52518">
    <property type="entry name" value="Thiamin diphosphate-binding fold (THDP-binding)"/>
    <property type="match status" value="1"/>
</dbReference>
<dbReference type="SUPFAM" id="SSF52922">
    <property type="entry name" value="TK C-terminal domain-like"/>
    <property type="match status" value="1"/>
</dbReference>
<name>ODPB_MOUSE</name>